<accession>P59645</accession>
<reference key="1">
    <citation type="submission" date="1998-02" db="EMBL/GenBank/DDBJ databases">
        <authorList>
            <person name="Lee N.H."/>
            <person name="Glodek A."/>
            <person name="Chandra I."/>
            <person name="Mason T.M."/>
            <person name="Quackenbush J."/>
            <person name="Kerlavage A.R."/>
            <person name="Adams M.D."/>
        </authorList>
    </citation>
    <scope>NUCLEOTIDE SEQUENCE [MRNA]</scope>
</reference>
<reference key="2">
    <citation type="journal article" date="2000" name="Genomics">
        <title>The FXYD gene family of small ion transport regulators or channels: cDNA sequence, protein signature sequence, and expression.</title>
        <authorList>
            <person name="Sweadner K.J."/>
            <person name="Rael E."/>
        </authorList>
    </citation>
    <scope>RECONSTRUCTION FROM ESTS</scope>
    <scope>CONCEPTUAL TRANSLATION</scope>
</reference>
<keyword id="KW-1003">Cell membrane</keyword>
<keyword id="KW-0318">Glutathionylation</keyword>
<keyword id="KW-0406">Ion transport</keyword>
<keyword id="KW-0472">Membrane</keyword>
<keyword id="KW-0630">Potassium</keyword>
<keyword id="KW-0633">Potassium transport</keyword>
<keyword id="KW-1185">Reference proteome</keyword>
<keyword id="KW-0732">Signal</keyword>
<keyword id="KW-0915">Sodium</keyword>
<keyword id="KW-0739">Sodium transport</keyword>
<keyword id="KW-0740">Sodium/potassium transport</keyword>
<keyword id="KW-0812">Transmembrane</keyword>
<keyword id="KW-1133">Transmembrane helix</keyword>
<keyword id="KW-0813">Transport</keyword>
<dbReference type="EMBL" id="AA801365">
    <property type="status" value="NOT_ANNOTATED_CDS"/>
    <property type="molecule type" value="mRNA"/>
</dbReference>
<dbReference type="RefSeq" id="NP_758528.1">
    <property type="nucleotide sequence ID" value="NM_172317.2"/>
</dbReference>
<dbReference type="RefSeq" id="XP_063122236.1">
    <property type="nucleotide sequence ID" value="XM_063266166.1"/>
</dbReference>
<dbReference type="RefSeq" id="XP_063122273.1">
    <property type="nucleotide sequence ID" value="XM_063266203.1"/>
</dbReference>
<dbReference type="SMR" id="P59645"/>
<dbReference type="FunCoup" id="P59645">
    <property type="interactions" value="26"/>
</dbReference>
<dbReference type="STRING" id="10116.ENSRNOP00000028637"/>
<dbReference type="PhosphoSitePlus" id="P59645"/>
<dbReference type="PaxDb" id="10116-ENSRNOP00000028637"/>
<dbReference type="GeneID" id="116831"/>
<dbReference type="KEGG" id="rno:116831"/>
<dbReference type="UCSC" id="RGD:620825">
    <property type="organism name" value="rat"/>
</dbReference>
<dbReference type="AGR" id="RGD:620825"/>
<dbReference type="CTD" id="5349"/>
<dbReference type="RGD" id="620825">
    <property type="gene designation" value="Fxyd3"/>
</dbReference>
<dbReference type="eggNOG" id="ENOG502S9Z9">
    <property type="taxonomic scope" value="Eukaryota"/>
</dbReference>
<dbReference type="HOGENOM" id="CLU_171208_0_1_1"/>
<dbReference type="InParanoid" id="P59645"/>
<dbReference type="OrthoDB" id="9888529at2759"/>
<dbReference type="PhylomeDB" id="P59645"/>
<dbReference type="TreeFam" id="TF333443"/>
<dbReference type="Reactome" id="R-RNO-5578775">
    <property type="pathway name" value="Ion homeostasis"/>
</dbReference>
<dbReference type="Reactome" id="R-RNO-936837">
    <property type="pathway name" value="Ion transport by P-type ATPases"/>
</dbReference>
<dbReference type="PRO" id="PR:P59645"/>
<dbReference type="Proteomes" id="UP000002494">
    <property type="component" value="Chromosome 1"/>
</dbReference>
<dbReference type="Bgee" id="ENSRNOG00000021095">
    <property type="expression patterns" value="Expressed in stomach and 18 other cell types or tissues"/>
</dbReference>
<dbReference type="GO" id="GO:0005789">
    <property type="term" value="C:endoplasmic reticulum membrane"/>
    <property type="evidence" value="ECO:0000266"/>
    <property type="project" value="RGD"/>
</dbReference>
<dbReference type="GO" id="GO:0005886">
    <property type="term" value="C:plasma membrane"/>
    <property type="evidence" value="ECO:0007669"/>
    <property type="project" value="UniProtKB-SubCell"/>
</dbReference>
<dbReference type="GO" id="GO:0051117">
    <property type="term" value="F:ATPase binding"/>
    <property type="evidence" value="ECO:0000266"/>
    <property type="project" value="RGD"/>
</dbReference>
<dbReference type="GO" id="GO:0017080">
    <property type="term" value="F:sodium channel regulator activity"/>
    <property type="evidence" value="ECO:0000318"/>
    <property type="project" value="GO_Central"/>
</dbReference>
<dbReference type="GO" id="GO:0006811">
    <property type="term" value="P:monoatomic ion transport"/>
    <property type="evidence" value="ECO:0000303"/>
    <property type="project" value="RGD"/>
</dbReference>
<dbReference type="GO" id="GO:1903278">
    <property type="term" value="P:positive regulation of sodium ion export across plasma membrane"/>
    <property type="evidence" value="ECO:0000318"/>
    <property type="project" value="GO_Central"/>
</dbReference>
<dbReference type="GO" id="GO:0006813">
    <property type="term" value="P:potassium ion transport"/>
    <property type="evidence" value="ECO:0007669"/>
    <property type="project" value="UniProtKB-KW"/>
</dbReference>
<dbReference type="GO" id="GO:0006814">
    <property type="term" value="P:sodium ion transport"/>
    <property type="evidence" value="ECO:0007669"/>
    <property type="project" value="UniProtKB-KW"/>
</dbReference>
<dbReference type="CDD" id="cd20328">
    <property type="entry name" value="FXYD3-like"/>
    <property type="match status" value="1"/>
</dbReference>
<dbReference type="FunFam" id="1.20.5.780:FF:000006">
    <property type="entry name" value="FXYD domain-containing ion transport regulator"/>
    <property type="match status" value="1"/>
</dbReference>
<dbReference type="Gene3D" id="1.20.5.780">
    <property type="entry name" value="Single helix bin"/>
    <property type="match status" value="1"/>
</dbReference>
<dbReference type="InterPro" id="IPR047297">
    <property type="entry name" value="FXYD_motif"/>
</dbReference>
<dbReference type="InterPro" id="IPR000272">
    <property type="entry name" value="Ion-transport_regulator_FXYD"/>
</dbReference>
<dbReference type="PANTHER" id="PTHR14132:SF11">
    <property type="entry name" value="FXYD DOMAIN-CONTAINING ION TRANSPORT REGULATOR 3"/>
    <property type="match status" value="1"/>
</dbReference>
<dbReference type="PANTHER" id="PTHR14132">
    <property type="entry name" value="SODIUM/POTASSIUM-TRANSPORTING ATPASE SUBUNIT GAMMA"/>
    <property type="match status" value="1"/>
</dbReference>
<dbReference type="Pfam" id="PF02038">
    <property type="entry name" value="ATP1G1_PLM_MAT8"/>
    <property type="match status" value="1"/>
</dbReference>
<dbReference type="PROSITE" id="PS01310">
    <property type="entry name" value="FXYD"/>
    <property type="match status" value="1"/>
</dbReference>
<gene>
    <name type="primary">Fxyd3</name>
</gene>
<name>FXYD3_RAT</name>
<sequence length="88" mass="9411">MQEFALSLLVLLAGLPTLDANDPEDKDSPFYYDWHSLRVGGLICAGILCALGIIVLMSGKCKCKFSQKPSHRPGDGPPLITPGSAHNC</sequence>
<comment type="function">
    <text evidence="1">Associates with and regulates the activity of the sodium/potassium-transporting ATPase (NKA) which transports Na(+) out of the cell and K(+) into the cell. Reduces glutathionylation of the NKA beta-1 subunit ATP1B1, thus reversing glutathionylation-mediated inhibition of ATP1B1. Induces a hyperpolarization-activated chloride current when expressed in Xenopus oocytes.</text>
</comment>
<comment type="subunit">
    <text evidence="1 2">Regulatory subunit of the sodium/potassium-transporting ATPase which is composed of a catalytic alpha subunit, a non-catalytic beta subunit and an additional regulatory subunit. Interacts with catalytic alpha subunit ATP1A1. Also interacts with non-catalytic beta subunit ATP1B1. Interacts with the alpha1-beta1, alpha2-beta1 and alpha3-beta1 NKA isozymes.</text>
</comment>
<comment type="subcellular location">
    <subcellularLocation>
        <location evidence="5">Cell membrane</location>
        <topology evidence="3">Single-pass type I membrane protein</topology>
    </subcellularLocation>
</comment>
<comment type="PTM">
    <text evidence="1">Glutathionylated.</text>
</comment>
<comment type="similarity">
    <text evidence="5">Belongs to the FXYD family.</text>
</comment>
<organism>
    <name type="scientific">Rattus norvegicus</name>
    <name type="common">Rat</name>
    <dbReference type="NCBI Taxonomy" id="10116"/>
    <lineage>
        <taxon>Eukaryota</taxon>
        <taxon>Metazoa</taxon>
        <taxon>Chordata</taxon>
        <taxon>Craniata</taxon>
        <taxon>Vertebrata</taxon>
        <taxon>Euteleostomi</taxon>
        <taxon>Mammalia</taxon>
        <taxon>Eutheria</taxon>
        <taxon>Euarchontoglires</taxon>
        <taxon>Glires</taxon>
        <taxon>Rodentia</taxon>
        <taxon>Myomorpha</taxon>
        <taxon>Muroidea</taxon>
        <taxon>Muridae</taxon>
        <taxon>Murinae</taxon>
        <taxon>Rattus</taxon>
    </lineage>
</organism>
<proteinExistence type="inferred from homology"/>
<evidence type="ECO:0000250" key="1">
    <source>
        <dbReference type="UniProtKB" id="Q14802"/>
    </source>
</evidence>
<evidence type="ECO:0000250" key="2">
    <source>
        <dbReference type="UniProtKB" id="Q61835"/>
    </source>
</evidence>
<evidence type="ECO:0000255" key="3"/>
<evidence type="ECO:0000256" key="4">
    <source>
        <dbReference type="SAM" id="MobiDB-lite"/>
    </source>
</evidence>
<evidence type="ECO:0000305" key="5"/>
<protein>
    <recommendedName>
        <fullName>FXYD domain-containing ion transport regulator 3</fullName>
    </recommendedName>
    <alternativeName>
        <fullName evidence="5">Sodium/potassium-transporting ATPase subunit FXYD3</fullName>
    </alternativeName>
</protein>
<feature type="signal peptide" evidence="1">
    <location>
        <begin position="1"/>
        <end position="20"/>
    </location>
</feature>
<feature type="chain" id="PRO_0000010365" description="FXYD domain-containing ion transport regulator 3">
    <location>
        <begin position="21"/>
        <end position="88"/>
    </location>
</feature>
<feature type="topological domain" description="Extracellular" evidence="3">
    <location>
        <begin position="21"/>
        <end position="38"/>
    </location>
</feature>
<feature type="transmembrane region" description="Helical" evidence="3">
    <location>
        <begin position="39"/>
        <end position="59"/>
    </location>
</feature>
<feature type="topological domain" description="Cytoplasmic" evidence="3">
    <location>
        <begin position="60"/>
        <end position="88"/>
    </location>
</feature>
<feature type="region of interest" description="Disordered" evidence="4">
    <location>
        <begin position="66"/>
        <end position="88"/>
    </location>
</feature>